<feature type="chain" id="PRO_0000200669" description="Ornithine cyclodeaminase">
    <location>
        <begin position="1"/>
        <end position="354"/>
    </location>
</feature>
<feature type="active site" description="Proton donor/acceptor" evidence="1">
    <location>
        <position position="235"/>
    </location>
</feature>
<feature type="binding site" evidence="1">
    <location>
        <position position="53"/>
    </location>
    <ligand>
        <name>L-ornithine</name>
        <dbReference type="ChEBI" id="CHEBI:46911"/>
    </ligand>
</feature>
<feature type="binding site" evidence="1">
    <location>
        <position position="77"/>
    </location>
    <ligand>
        <name>L-ornithine</name>
        <dbReference type="ChEBI" id="CHEBI:46911"/>
    </ligand>
</feature>
<feature type="binding site" evidence="1">
    <location>
        <position position="92"/>
    </location>
    <ligand>
        <name>NAD(+)</name>
        <dbReference type="ChEBI" id="CHEBI:57540"/>
    </ligand>
</feature>
<feature type="binding site" evidence="1">
    <location>
        <position position="120"/>
    </location>
    <ligand>
        <name>L-ornithine</name>
        <dbReference type="ChEBI" id="CHEBI:46911"/>
    </ligand>
</feature>
<feature type="binding site" evidence="1">
    <location>
        <position position="120"/>
    </location>
    <ligand>
        <name>NAD(+)</name>
        <dbReference type="ChEBI" id="CHEBI:57540"/>
    </ligand>
</feature>
<feature type="binding site" evidence="1">
    <location>
        <begin position="147"/>
        <end position="148"/>
    </location>
    <ligand>
        <name>NAD(+)</name>
        <dbReference type="ChEBI" id="CHEBI:57540"/>
    </ligand>
</feature>
<feature type="binding site" evidence="1">
    <location>
        <position position="169"/>
    </location>
    <ligand>
        <name>NAD(+)</name>
        <dbReference type="ChEBI" id="CHEBI:57540"/>
    </ligand>
</feature>
<feature type="binding site" evidence="1">
    <location>
        <position position="209"/>
    </location>
    <ligand>
        <name>NAD(+)</name>
        <dbReference type="ChEBI" id="CHEBI:57540"/>
    </ligand>
</feature>
<feature type="binding site" evidence="1">
    <location>
        <begin position="232"/>
        <end position="235"/>
    </location>
    <ligand>
        <name>NAD(+)</name>
        <dbReference type="ChEBI" id="CHEBI:57540"/>
    </ligand>
</feature>
<feature type="binding site" evidence="1">
    <location>
        <position position="235"/>
    </location>
    <ligand>
        <name>L-ornithine</name>
        <dbReference type="ChEBI" id="CHEBI:46911"/>
    </ligand>
</feature>
<feature type="binding site" evidence="1">
    <location>
        <position position="239"/>
    </location>
    <ligand>
        <name>NAD(+)</name>
        <dbReference type="ChEBI" id="CHEBI:57540"/>
    </ligand>
</feature>
<feature type="binding site" evidence="1">
    <location>
        <position position="300"/>
    </location>
    <ligand>
        <name>NAD(+)</name>
        <dbReference type="ChEBI" id="CHEBI:57540"/>
    </ligand>
</feature>
<feature type="binding site" evidence="1">
    <location>
        <position position="301"/>
    </location>
    <ligand>
        <name>L-ornithine</name>
        <dbReference type="ChEBI" id="CHEBI:46911"/>
    </ligand>
</feature>
<feature type="sequence conflict" description="In Ref. 1 and 2." evidence="4" ref="1 2">
    <original>K</original>
    <variation>E</variation>
    <location>
        <position position="212"/>
    </location>
</feature>
<feature type="sequence conflict" description="In Ref. 1 and 2." evidence="4" ref="1 2">
    <original>L</original>
    <variation>I</variation>
    <location>
        <position position="297"/>
    </location>
</feature>
<keyword id="KW-0456">Lyase</keyword>
<keyword id="KW-0520">NAD</keyword>
<keyword id="KW-0614">Plasmid</keyword>
<keyword id="KW-1185">Reference proteome</keyword>
<geneLocation type="plasmid">
    <name>pTiC58</name>
</geneLocation>
<gene>
    <name evidence="3" type="primary">ocd</name>
    <name type="ordered locus">Atu6016</name>
    <name type="ORF">AGR_pTi_54</name>
</gene>
<evidence type="ECO:0000250" key="1">
    <source>
        <dbReference type="UniProtKB" id="Q88H32"/>
    </source>
</evidence>
<evidence type="ECO:0000269" key="2">
    <source>
    </source>
</evidence>
<evidence type="ECO:0000303" key="3">
    <source>
    </source>
</evidence>
<evidence type="ECO:0000305" key="4"/>
<dbReference type="EC" id="4.3.1.12" evidence="2"/>
<dbReference type="EMBL" id="X07435">
    <property type="protein sequence ID" value="CAA30316.1"/>
    <property type="molecule type" value="Genomic_DNA"/>
</dbReference>
<dbReference type="EMBL" id="Z30316">
    <property type="protein sequence ID" value="CAA82966.1"/>
    <property type="molecule type" value="Genomic_DNA"/>
</dbReference>
<dbReference type="EMBL" id="AE007871">
    <property type="protein sequence ID" value="AAK90974.1"/>
    <property type="status" value="ALT_INIT"/>
    <property type="molecule type" value="Genomic_DNA"/>
</dbReference>
<dbReference type="PIR" id="AF3229">
    <property type="entry name" value="AF3229"/>
</dbReference>
<dbReference type="PIR" id="S00402">
    <property type="entry name" value="DUAGO"/>
</dbReference>
<dbReference type="PIR" id="S55582">
    <property type="entry name" value="S55582"/>
</dbReference>
<dbReference type="RefSeq" id="NP_396533.3">
    <property type="nucleotide sequence ID" value="NC_003065.3"/>
</dbReference>
<dbReference type="RefSeq" id="WP_010891456.1">
    <property type="nucleotide sequence ID" value="NC_003065.3"/>
</dbReference>
<dbReference type="SMR" id="P09773"/>
<dbReference type="EnsemblBacteria" id="AAK90974">
    <property type="protein sequence ID" value="AAK90974"/>
    <property type="gene ID" value="Atu6016"/>
</dbReference>
<dbReference type="GeneID" id="1137339"/>
<dbReference type="KEGG" id="atu:Atu6016"/>
<dbReference type="PATRIC" id="fig|176299.10.peg.5223"/>
<dbReference type="HOGENOM" id="CLU_042088_3_2_5"/>
<dbReference type="OrthoDB" id="7209364at2"/>
<dbReference type="BioCyc" id="MetaCyc:MONOMER-11553"/>
<dbReference type="SABIO-RK" id="P09773"/>
<dbReference type="UniPathway" id="UPA00098">
    <property type="reaction ID" value="UER00357"/>
</dbReference>
<dbReference type="Proteomes" id="UP000000813">
    <property type="component" value="Plasmid Ti"/>
</dbReference>
<dbReference type="GO" id="GO:0008473">
    <property type="term" value="F:ornithine cyclodeaminase activity"/>
    <property type="evidence" value="ECO:0007669"/>
    <property type="project" value="UniProtKB-EC"/>
</dbReference>
<dbReference type="GO" id="GO:0055129">
    <property type="term" value="P:L-proline biosynthetic process"/>
    <property type="evidence" value="ECO:0007669"/>
    <property type="project" value="UniProtKB-UniPathway"/>
</dbReference>
<dbReference type="Gene3D" id="3.40.50.720">
    <property type="entry name" value="NAD(P)-binding Rossmann-like Domain"/>
    <property type="match status" value="1"/>
</dbReference>
<dbReference type="Gene3D" id="3.30.1780.10">
    <property type="entry name" value="ornithine cyclodeaminase, domain 1"/>
    <property type="match status" value="1"/>
</dbReference>
<dbReference type="InterPro" id="IPR036291">
    <property type="entry name" value="NAD(P)-bd_dom_sf"/>
</dbReference>
<dbReference type="InterPro" id="IPR003462">
    <property type="entry name" value="ODC_Mu_crystall"/>
</dbReference>
<dbReference type="InterPro" id="IPR023401">
    <property type="entry name" value="ODC_N"/>
</dbReference>
<dbReference type="NCBIfam" id="NF005762">
    <property type="entry name" value="PRK07589.1"/>
    <property type="match status" value="1"/>
</dbReference>
<dbReference type="PANTHER" id="PTHR13812">
    <property type="entry name" value="KETIMINE REDUCTASE MU-CRYSTALLIN"/>
    <property type="match status" value="1"/>
</dbReference>
<dbReference type="PANTHER" id="PTHR13812:SF19">
    <property type="entry name" value="KETIMINE REDUCTASE MU-CRYSTALLIN"/>
    <property type="match status" value="1"/>
</dbReference>
<dbReference type="Pfam" id="PF02423">
    <property type="entry name" value="OCD_Mu_crystall"/>
    <property type="match status" value="1"/>
</dbReference>
<dbReference type="SUPFAM" id="SSF51735">
    <property type="entry name" value="NAD(P)-binding Rossmann-fold domains"/>
    <property type="match status" value="1"/>
</dbReference>
<organism>
    <name type="scientific">Agrobacterium fabrum (strain C58 / ATCC 33970)</name>
    <name type="common">Agrobacterium tumefaciens (strain C58)</name>
    <dbReference type="NCBI Taxonomy" id="176299"/>
    <lineage>
        <taxon>Bacteria</taxon>
        <taxon>Pseudomonadati</taxon>
        <taxon>Pseudomonadota</taxon>
        <taxon>Alphaproteobacteria</taxon>
        <taxon>Hyphomicrobiales</taxon>
        <taxon>Rhizobiaceae</taxon>
        <taxon>Rhizobium/Agrobacterium group</taxon>
        <taxon>Agrobacterium</taxon>
        <taxon>Agrobacterium tumefaciens complex</taxon>
    </lineage>
</organism>
<protein>
    <recommendedName>
        <fullName evidence="3">Ornithine cyclodeaminase</fullName>
        <shortName evidence="3">OCD</shortName>
        <ecNumber evidence="2">4.3.1.12</ecNumber>
    </recommendedName>
</protein>
<reference key="1">
    <citation type="journal article" date="1988" name="Eur. J. Biochem.">
        <title>Ornithine cyclodeaminase from Ti plasmid C58: DNA sequence, enzyme properties and regulation of activity by arginine.</title>
        <authorList>
            <person name="Sans N."/>
            <person name="Schindler U."/>
            <person name="Schroeder J."/>
        </authorList>
    </citation>
    <scope>NUCLEOTIDE SEQUENCE [GENOMIC DNA]</scope>
    <scope>FUNCTION</scope>
    <scope>CATALYTIC ACTIVITY</scope>
    <scope>COFACTOR</scope>
    <scope>BIOPHYSICOCHEMICAL PROPERTIES</scope>
    <scope>ACTIVITY REGULATION</scope>
    <scope>INDUCTION</scope>
    <scope>PATHWAY</scope>
</reference>
<reference key="2">
    <citation type="journal article" date="1994" name="J. Bacteriol.">
        <title>Octopine and nopaline oxidases from Ti plasmids of Agrobacterium tumefaciens: molecular analysis, relationship, and functional characterization.</title>
        <authorList>
            <person name="Zanker H."/>
            <person name="Lurz G."/>
            <person name="Langridge U."/>
            <person name="Langridge P."/>
            <person name="Kreusch D."/>
            <person name="Schroeder J."/>
        </authorList>
    </citation>
    <scope>NUCLEOTIDE SEQUENCE [GENOMIC DNA]</scope>
</reference>
<reference key="3">
    <citation type="journal article" date="2001" name="Science">
        <title>The genome of the natural genetic engineer Agrobacterium tumefaciens C58.</title>
        <authorList>
            <person name="Wood D.W."/>
            <person name="Setubal J.C."/>
            <person name="Kaul R."/>
            <person name="Monks D.E."/>
            <person name="Kitajima J.P."/>
            <person name="Okura V.K."/>
            <person name="Zhou Y."/>
            <person name="Chen L."/>
            <person name="Wood G.E."/>
            <person name="Almeida N.F. Jr."/>
            <person name="Woo L."/>
            <person name="Chen Y."/>
            <person name="Paulsen I.T."/>
            <person name="Eisen J.A."/>
            <person name="Karp P.D."/>
            <person name="Bovee D. Sr."/>
            <person name="Chapman P."/>
            <person name="Clendenning J."/>
            <person name="Deatherage G."/>
            <person name="Gillet W."/>
            <person name="Grant C."/>
            <person name="Kutyavin T."/>
            <person name="Levy R."/>
            <person name="Li M.-J."/>
            <person name="McClelland E."/>
            <person name="Palmieri A."/>
            <person name="Raymond C."/>
            <person name="Rouse G."/>
            <person name="Saenphimmachak C."/>
            <person name="Wu Z."/>
            <person name="Romero P."/>
            <person name="Gordon D."/>
            <person name="Zhang S."/>
            <person name="Yoo H."/>
            <person name="Tao Y."/>
            <person name="Biddle P."/>
            <person name="Jung M."/>
            <person name="Krespan W."/>
            <person name="Perry M."/>
            <person name="Gordon-Kamm B."/>
            <person name="Liao L."/>
            <person name="Kim S."/>
            <person name="Hendrick C."/>
            <person name="Zhao Z.-Y."/>
            <person name="Dolan M."/>
            <person name="Chumley F."/>
            <person name="Tingey S.V."/>
            <person name="Tomb J.-F."/>
            <person name="Gordon M.P."/>
            <person name="Olson M.V."/>
            <person name="Nester E.W."/>
        </authorList>
    </citation>
    <scope>NUCLEOTIDE SEQUENCE [LARGE SCALE GENOMIC DNA]</scope>
</reference>
<reference key="4">
    <citation type="journal article" date="2001" name="Science">
        <title>Genome sequence of the plant pathogen and biotechnology agent Agrobacterium tumefaciens C58.</title>
        <authorList>
            <person name="Goodner B."/>
            <person name="Hinkle G."/>
            <person name="Gattung S."/>
            <person name="Miller N."/>
            <person name="Blanchard M."/>
            <person name="Qurollo B."/>
            <person name="Goldman B.S."/>
            <person name="Cao Y."/>
            <person name="Askenazi M."/>
            <person name="Halling C."/>
            <person name="Mullin L."/>
            <person name="Houmiel K."/>
            <person name="Gordon J."/>
            <person name="Vaudin M."/>
            <person name="Iartchouk O."/>
            <person name="Epp A."/>
            <person name="Liu F."/>
            <person name="Wollam C."/>
            <person name="Allinger M."/>
            <person name="Doughty D."/>
            <person name="Scott C."/>
            <person name="Lappas C."/>
            <person name="Markelz B."/>
            <person name="Flanagan C."/>
            <person name="Crowell C."/>
            <person name="Gurson J."/>
            <person name="Lomo C."/>
            <person name="Sear C."/>
            <person name="Strub G."/>
            <person name="Cielo C."/>
            <person name="Slater S."/>
        </authorList>
    </citation>
    <scope>NUCLEOTIDE SEQUENCE [LARGE SCALE GENOMIC DNA]</scope>
    <source>
        <strain>C58 / ATCC 33970</strain>
    </source>
</reference>
<name>OCD_AGRFC</name>
<sequence length="354" mass="38983">MPALANLNIVPFISVENMMDLAVSTGIENFLVQLAGYIEEDFRRWESFDKIPRIASHSRDGVIELMPTSDGTLYGFKYVNGHPKNTKSGRQTVTAFGVLSDVDSGYPLLLSEMTILTALRTAATSAIAAKYLARKDSRTMALIGNGAQSEFQALAFKALIGVDRIRLYDIDPEATARCSRNLQRFGFQIEACTSAEQAVEGADIITTATADKHNATILSDNMIGPGVHINGVGGDCPGKTEMHRDILLRSDIFVEFPPQTRIEGEIQQLAPDHPVTELWRVMTGQDVGRKSDKQITLFDSVGFAIEDFSALRYVRDRVEGSSHSSPLDLLADPDEPRDLFGMLLRRQAFRRLGG</sequence>
<accession>P09773</accession>
<comment type="function">
    <text evidence="2">Catalyzes the conversion of L-ornithine into L-proline with release of ammonia. Is involved in the utilization of nopaline, a catabolic pathway that proceeds through L-arginine and L-ornithine to L-proline. Nopaline is a predominant opine in plant cells transformed with Ti plasmid pTiC58.</text>
</comment>
<comment type="catalytic activity">
    <reaction evidence="2">
        <text>L-ornithine = L-proline + NH4(+)</text>
        <dbReference type="Rhea" id="RHEA:24368"/>
        <dbReference type="ChEBI" id="CHEBI:28938"/>
        <dbReference type="ChEBI" id="CHEBI:46911"/>
        <dbReference type="ChEBI" id="CHEBI:60039"/>
        <dbReference type="EC" id="4.3.1.12"/>
    </reaction>
</comment>
<comment type="cofactor">
    <cofactor evidence="2">
        <name>NAD(+)</name>
        <dbReference type="ChEBI" id="CHEBI:57540"/>
    </cofactor>
</comment>
<comment type="activity regulation">
    <text evidence="2">Is subject to substrate inhibition. Is regulated by L-arginine, which stimulates enzymatic activity at 0.1-1 mM while inhibits activity at higher concentrations, and has pronounced effects on the optima for pH and temperature and on the Km for L-ornithine. Is not inhibited by L-proline.</text>
</comment>
<comment type="biophysicochemical properties">
    <kinetics>
        <KM evidence="2">1.7 mM for L-ornithine (in the absence of L-arginine)</KM>
        <KM evidence="2">0.25 mM for L-ornithine (in the presence of 1 mM L-arginine)</KM>
        <KM evidence="2">8 uM for NAD(+)</KM>
    </kinetics>
    <phDependence>
        <text evidence="2">Optimum pH is 8.0-9.5 in the presence of L-arginine, and 8.5-9.0 in the presence of 1 mM L-arginine.</text>
    </phDependence>
    <temperatureDependence>
        <text evidence="2">Optimum temperature is 25-35 degrees Celsius in the presence of L-arginine, and 38-42 degrees Celsius in the presence of 1 mM L-arginine.</text>
    </temperatureDependence>
</comment>
<comment type="pathway">
    <text evidence="2">Amino-acid biosynthesis; L-proline biosynthesis; L-proline from L-ornithine: step 1/1.</text>
</comment>
<comment type="induction">
    <text evidence="2">Is induced by nopaline.</text>
</comment>
<comment type="similarity">
    <text evidence="4">Belongs to the ornithine cyclodeaminase/mu-crystallin family.</text>
</comment>
<comment type="sequence caution" evidence="4">
    <conflict type="erroneous initiation">
        <sequence resource="EMBL-CDS" id="AAK90974"/>
    </conflict>
</comment>
<proteinExistence type="evidence at protein level"/>